<dbReference type="EC" id="3.4.21.20" evidence="7 26 27 35 36 38"/>
<dbReference type="EMBL" id="M16117">
    <property type="protein sequence ID" value="AAA52126.1"/>
    <property type="molecule type" value="mRNA"/>
</dbReference>
<dbReference type="EMBL" id="J04990">
    <property type="protein sequence ID" value="AAA51919.1"/>
    <property type="molecule type" value="Genomic_DNA"/>
</dbReference>
<dbReference type="EMBL" id="CR456807">
    <property type="protein sequence ID" value="CAG33088.1"/>
    <property type="molecule type" value="mRNA"/>
</dbReference>
<dbReference type="EMBL" id="CR541704">
    <property type="protein sequence ID" value="CAG46505.1"/>
    <property type="molecule type" value="mRNA"/>
</dbReference>
<dbReference type="EMBL" id="CH471078">
    <property type="protein sequence ID" value="EAW66006.1"/>
    <property type="molecule type" value="Genomic_DNA"/>
</dbReference>
<dbReference type="EMBL" id="BC014460">
    <property type="protein sequence ID" value="AAH14460.1"/>
    <property type="molecule type" value="mRNA"/>
</dbReference>
<dbReference type="CCDS" id="CCDS9631.1"/>
<dbReference type="PIR" id="A32627">
    <property type="entry name" value="A27122"/>
</dbReference>
<dbReference type="RefSeq" id="NP_001902.1">
    <property type="nucleotide sequence ID" value="NM_001911.3"/>
</dbReference>
<dbReference type="PDB" id="1AU8">
    <property type="method" value="X-ray"/>
    <property type="resolution" value="1.90 A"/>
    <property type="chains" value="A=21-244"/>
</dbReference>
<dbReference type="PDB" id="1CGH">
    <property type="method" value="X-ray"/>
    <property type="resolution" value="1.80 A"/>
    <property type="chains" value="A=21-244"/>
</dbReference>
<dbReference type="PDB" id="1KYN">
    <property type="method" value="X-ray"/>
    <property type="resolution" value="3.50 A"/>
    <property type="chains" value="A/B=21-255"/>
</dbReference>
<dbReference type="PDB" id="1T32">
    <property type="method" value="X-ray"/>
    <property type="resolution" value="1.85 A"/>
    <property type="chains" value="A=21-244"/>
</dbReference>
<dbReference type="PDB" id="6VTM">
    <property type="method" value="X-ray"/>
    <property type="resolution" value="1.60 A"/>
    <property type="chains" value="A/C/D/G=21-244"/>
</dbReference>
<dbReference type="PDB" id="7H6G">
    <property type="method" value="X-ray"/>
    <property type="resolution" value="1.21 A"/>
    <property type="chains" value="A/B=21-255"/>
</dbReference>
<dbReference type="PDB" id="7H6H">
    <property type="method" value="X-ray"/>
    <property type="resolution" value="1.94 A"/>
    <property type="chains" value="A=21-255"/>
</dbReference>
<dbReference type="PDB" id="8D4S">
    <property type="method" value="X-ray"/>
    <property type="resolution" value="1.95 A"/>
    <property type="chains" value="A/C/E/G=21-243"/>
</dbReference>
<dbReference type="PDB" id="8D4V">
    <property type="method" value="X-ray"/>
    <property type="resolution" value="1.85 A"/>
    <property type="chains" value="A/C=21-243"/>
</dbReference>
<dbReference type="PDB" id="8D7I">
    <property type="method" value="X-ray"/>
    <property type="resolution" value="3.63 A"/>
    <property type="chains" value="C/F/I/L/O/R=21-243"/>
</dbReference>
<dbReference type="PDB" id="8D7K">
    <property type="method" value="X-ray"/>
    <property type="resolution" value="3.10 A"/>
    <property type="chains" value="C/F/I/L=21-243"/>
</dbReference>
<dbReference type="PDB" id="8G24">
    <property type="method" value="X-ray"/>
    <property type="resolution" value="1.82 A"/>
    <property type="chains" value="A=21-243"/>
</dbReference>
<dbReference type="PDB" id="8G25">
    <property type="method" value="X-ray"/>
    <property type="resolution" value="1.80 A"/>
    <property type="chains" value="A/F/I=21-243"/>
</dbReference>
<dbReference type="PDB" id="8G26">
    <property type="method" value="X-ray"/>
    <property type="resolution" value="1.85 A"/>
    <property type="chains" value="A=21-243"/>
</dbReference>
<dbReference type="PDB" id="9ASX">
    <property type="method" value="X-ray"/>
    <property type="resolution" value="1.96 A"/>
    <property type="chains" value="A=21-243"/>
</dbReference>
<dbReference type="PDB" id="9ATK">
    <property type="method" value="X-ray"/>
    <property type="resolution" value="2.11 A"/>
    <property type="chains" value="B/E/H/K=21-243"/>
</dbReference>
<dbReference type="PDBsum" id="1AU8"/>
<dbReference type="PDBsum" id="1CGH"/>
<dbReference type="PDBsum" id="1KYN"/>
<dbReference type="PDBsum" id="1T32"/>
<dbReference type="PDBsum" id="6VTM"/>
<dbReference type="PDBsum" id="7H6G"/>
<dbReference type="PDBsum" id="7H6H"/>
<dbReference type="PDBsum" id="8D4S"/>
<dbReference type="PDBsum" id="8D4V"/>
<dbReference type="PDBsum" id="8D7I"/>
<dbReference type="PDBsum" id="8D7K"/>
<dbReference type="PDBsum" id="8G24"/>
<dbReference type="PDBsum" id="8G25"/>
<dbReference type="PDBsum" id="8G26"/>
<dbReference type="PDBsum" id="9ASX"/>
<dbReference type="PDBsum" id="9ATK"/>
<dbReference type="SASBDB" id="P08311"/>
<dbReference type="SMR" id="P08311"/>
<dbReference type="BioGRID" id="107891">
    <property type="interactions" value="103"/>
</dbReference>
<dbReference type="CORUM" id="P08311"/>
<dbReference type="FunCoup" id="P08311">
    <property type="interactions" value="838"/>
</dbReference>
<dbReference type="IntAct" id="P08311">
    <property type="interactions" value="71"/>
</dbReference>
<dbReference type="MINT" id="P08311"/>
<dbReference type="STRING" id="9606.ENSP00000216336"/>
<dbReference type="BindingDB" id="P08311"/>
<dbReference type="ChEMBL" id="CHEMBL4071"/>
<dbReference type="DrugBank" id="DB04016">
    <property type="generic name" value="2-[3-({Methyl[1-(2-Naphthoyl)Piperidin-4-Yl]Amino}Carbonyl)-2-Naphthyl]-1-(1-Naphthyl)-2-Oxoethylphosphonic Acid"/>
</dbReference>
<dbReference type="DrugBank" id="DB18145">
    <property type="generic name" value="Aloxistatin"/>
</dbReference>
<dbReference type="DrugBank" id="DB02360">
    <property type="generic name" value="Bis-Napthyl Beta-Ketophosphonic Acid"/>
</dbReference>
<dbReference type="DrugCentral" id="P08311"/>
<dbReference type="GuidetoPHARMACOLOGY" id="2348"/>
<dbReference type="MEROPS" id="S01.133"/>
<dbReference type="GlyCosmos" id="P08311">
    <property type="glycosylation" value="1 site, No reported glycans"/>
</dbReference>
<dbReference type="GlyGen" id="P08311">
    <property type="glycosylation" value="3 sites, 6 N-linked glycans (1 site), 1 O-linked glycan (1 site)"/>
</dbReference>
<dbReference type="iPTMnet" id="P08311"/>
<dbReference type="PhosphoSitePlus" id="P08311"/>
<dbReference type="BioMuta" id="CTSG"/>
<dbReference type="DMDM" id="115725"/>
<dbReference type="jPOST" id="P08311"/>
<dbReference type="MassIVE" id="P08311"/>
<dbReference type="PaxDb" id="9606-ENSP00000216336"/>
<dbReference type="PeptideAtlas" id="P08311"/>
<dbReference type="PRIDE" id="P08311"/>
<dbReference type="ProteomicsDB" id="52105"/>
<dbReference type="Pumba" id="P08311"/>
<dbReference type="TopDownProteomics" id="P08311"/>
<dbReference type="Antibodypedia" id="3597">
    <property type="antibodies" value="411 antibodies from 35 providers"/>
</dbReference>
<dbReference type="DNASU" id="1511"/>
<dbReference type="Ensembl" id="ENST00000216336.3">
    <property type="protein sequence ID" value="ENSP00000216336.2"/>
    <property type="gene ID" value="ENSG00000100448.4"/>
</dbReference>
<dbReference type="GeneID" id="1511"/>
<dbReference type="KEGG" id="hsa:1511"/>
<dbReference type="MANE-Select" id="ENST00000216336.3">
    <property type="protein sequence ID" value="ENSP00000216336.2"/>
    <property type="RefSeq nucleotide sequence ID" value="NM_001911.3"/>
    <property type="RefSeq protein sequence ID" value="NP_001902.1"/>
</dbReference>
<dbReference type="UCSC" id="uc001wpq.4">
    <property type="organism name" value="human"/>
</dbReference>
<dbReference type="AGR" id="HGNC:2532"/>
<dbReference type="CTD" id="1511"/>
<dbReference type="DisGeNET" id="1511"/>
<dbReference type="GeneCards" id="CTSG"/>
<dbReference type="HGNC" id="HGNC:2532">
    <property type="gene designation" value="CTSG"/>
</dbReference>
<dbReference type="HPA" id="ENSG00000100448">
    <property type="expression patterns" value="Tissue enriched (bone)"/>
</dbReference>
<dbReference type="MIM" id="116830">
    <property type="type" value="gene"/>
</dbReference>
<dbReference type="neXtProt" id="NX_P08311"/>
<dbReference type="OpenTargets" id="ENSG00000100448"/>
<dbReference type="PharmGKB" id="PA27032"/>
<dbReference type="VEuPathDB" id="HostDB:ENSG00000100448"/>
<dbReference type="eggNOG" id="KOG3627">
    <property type="taxonomic scope" value="Eukaryota"/>
</dbReference>
<dbReference type="GeneTree" id="ENSGT01030000234551"/>
<dbReference type="HOGENOM" id="CLU_006842_1_0_1"/>
<dbReference type="InParanoid" id="P08311"/>
<dbReference type="OMA" id="QLDQMEI"/>
<dbReference type="OrthoDB" id="5565075at2759"/>
<dbReference type="PAN-GO" id="P08311">
    <property type="GO annotations" value="2 GO annotations based on evolutionary models"/>
</dbReference>
<dbReference type="PhylomeDB" id="P08311"/>
<dbReference type="TreeFam" id="TF333630"/>
<dbReference type="BRENDA" id="3.4.21.20">
    <property type="organism ID" value="2681"/>
</dbReference>
<dbReference type="PathwayCommons" id="P08311"/>
<dbReference type="Reactome" id="R-HSA-1474228">
    <property type="pathway name" value="Degradation of the extracellular matrix"/>
</dbReference>
<dbReference type="Reactome" id="R-HSA-1592389">
    <property type="pathway name" value="Activation of Matrix Metalloproteinases"/>
</dbReference>
<dbReference type="Reactome" id="R-HSA-2022377">
    <property type="pathway name" value="Metabolism of Angiotensinogen to Angiotensins"/>
</dbReference>
<dbReference type="Reactome" id="R-HSA-381426">
    <property type="pathway name" value="Regulation of Insulin-like Growth Factor (IGF) transport and uptake by Insulin-like Growth Factor Binding Proteins (IGFBPs)"/>
</dbReference>
<dbReference type="Reactome" id="R-HSA-448706">
    <property type="pathway name" value="Interleukin-1 processing"/>
</dbReference>
<dbReference type="Reactome" id="R-HSA-6798695">
    <property type="pathway name" value="Neutrophil degranulation"/>
</dbReference>
<dbReference type="Reactome" id="R-HSA-6803157">
    <property type="pathway name" value="Antimicrobial peptides"/>
</dbReference>
<dbReference type="Reactome" id="R-HSA-9635465">
    <property type="pathway name" value="Suppression of apoptosis"/>
</dbReference>
<dbReference type="Reactome" id="R-HSA-9660826">
    <property type="pathway name" value="Purinergic signaling in leishmaniasis infection"/>
</dbReference>
<dbReference type="SABIO-RK" id="P08311"/>
<dbReference type="SignaLink" id="P08311"/>
<dbReference type="SIGNOR" id="P08311"/>
<dbReference type="BioGRID-ORCS" id="1511">
    <property type="hits" value="8 hits in 1151 CRISPR screens"/>
</dbReference>
<dbReference type="ChiTaRS" id="CTSG">
    <property type="organism name" value="human"/>
</dbReference>
<dbReference type="EvolutionaryTrace" id="P08311"/>
<dbReference type="GeneWiki" id="Cathepsin_G"/>
<dbReference type="GenomeRNAi" id="1511"/>
<dbReference type="Pharos" id="P08311">
    <property type="development level" value="Tchem"/>
</dbReference>
<dbReference type="PRO" id="PR:P08311"/>
<dbReference type="Proteomes" id="UP000005640">
    <property type="component" value="Chromosome 14"/>
</dbReference>
<dbReference type="RNAct" id="P08311">
    <property type="molecule type" value="protein"/>
</dbReference>
<dbReference type="Bgee" id="ENSG00000100448">
    <property type="expression patterns" value="Expressed in trabecular bone tissue and 140 other cell types or tissues"/>
</dbReference>
<dbReference type="GO" id="GO:0035578">
    <property type="term" value="C:azurophil granule lumen"/>
    <property type="evidence" value="ECO:0000304"/>
    <property type="project" value="Reactome"/>
</dbReference>
<dbReference type="GO" id="GO:0062023">
    <property type="term" value="C:collagen-containing extracellular matrix"/>
    <property type="evidence" value="ECO:0007005"/>
    <property type="project" value="BHF-UCL"/>
</dbReference>
<dbReference type="GO" id="GO:0010494">
    <property type="term" value="C:cytoplasmic stress granule"/>
    <property type="evidence" value="ECO:0000314"/>
    <property type="project" value="UniProtKB"/>
</dbReference>
<dbReference type="GO" id="GO:0005829">
    <property type="term" value="C:cytosol"/>
    <property type="evidence" value="ECO:0000314"/>
    <property type="project" value="UniProtKB"/>
</dbReference>
<dbReference type="GO" id="GO:0070062">
    <property type="term" value="C:extracellular exosome"/>
    <property type="evidence" value="ECO:0007005"/>
    <property type="project" value="UniProtKB"/>
</dbReference>
<dbReference type="GO" id="GO:0005576">
    <property type="term" value="C:extracellular region"/>
    <property type="evidence" value="ECO:0007005"/>
    <property type="project" value="BHF-UCL"/>
</dbReference>
<dbReference type="GO" id="GO:0005615">
    <property type="term" value="C:extracellular space"/>
    <property type="evidence" value="ECO:0000314"/>
    <property type="project" value="UniProtKB"/>
</dbReference>
<dbReference type="GO" id="GO:0005764">
    <property type="term" value="C:lysosome"/>
    <property type="evidence" value="ECO:0000314"/>
    <property type="project" value="UniProtKB"/>
</dbReference>
<dbReference type="GO" id="GO:0016020">
    <property type="term" value="C:membrane"/>
    <property type="evidence" value="ECO:0000314"/>
    <property type="project" value="UniProtKB"/>
</dbReference>
<dbReference type="GO" id="GO:0005634">
    <property type="term" value="C:nucleus"/>
    <property type="evidence" value="ECO:0000314"/>
    <property type="project" value="UniProtKB"/>
</dbReference>
<dbReference type="GO" id="GO:0005886">
    <property type="term" value="C:plasma membrane"/>
    <property type="evidence" value="ECO:0000314"/>
    <property type="project" value="UniProtKB"/>
</dbReference>
<dbReference type="GO" id="GO:0030141">
    <property type="term" value="C:secretory granule"/>
    <property type="evidence" value="ECO:0000314"/>
    <property type="project" value="MGI"/>
</dbReference>
<dbReference type="GO" id="GO:0089720">
    <property type="term" value="F:caspase binding"/>
    <property type="evidence" value="ECO:0000353"/>
    <property type="project" value="UniProtKB"/>
</dbReference>
<dbReference type="GO" id="GO:0008201">
    <property type="term" value="F:heparin binding"/>
    <property type="evidence" value="ECO:0000314"/>
    <property type="project" value="MGI"/>
</dbReference>
<dbReference type="GO" id="GO:0008233">
    <property type="term" value="F:peptidase activity"/>
    <property type="evidence" value="ECO:0000314"/>
    <property type="project" value="MGI"/>
</dbReference>
<dbReference type="GO" id="GO:0048018">
    <property type="term" value="F:receptor ligand activity"/>
    <property type="evidence" value="ECO:0000314"/>
    <property type="project" value="UniProtKB"/>
</dbReference>
<dbReference type="GO" id="GO:0004252">
    <property type="term" value="F:serine-type endopeptidase activity"/>
    <property type="evidence" value="ECO:0000314"/>
    <property type="project" value="UniProtKB"/>
</dbReference>
<dbReference type="GO" id="GO:0008236">
    <property type="term" value="F:serine-type peptidase activity"/>
    <property type="evidence" value="ECO:0000315"/>
    <property type="project" value="UniProtKB"/>
</dbReference>
<dbReference type="GO" id="GO:0002003">
    <property type="term" value="P:angiotensin maturation"/>
    <property type="evidence" value="ECO:0000304"/>
    <property type="project" value="Reactome"/>
</dbReference>
<dbReference type="GO" id="GO:0019731">
    <property type="term" value="P:antibacterial humoral response"/>
    <property type="evidence" value="ECO:0000314"/>
    <property type="project" value="UniProtKB"/>
</dbReference>
<dbReference type="GO" id="GO:0098786">
    <property type="term" value="P:biofilm matrix disassembly"/>
    <property type="evidence" value="ECO:0000314"/>
    <property type="project" value="UniProtKB"/>
</dbReference>
<dbReference type="GO" id="GO:0071222">
    <property type="term" value="P:cellular response to lipopolysaccharide"/>
    <property type="evidence" value="ECO:0000314"/>
    <property type="project" value="UniProtKB"/>
</dbReference>
<dbReference type="GO" id="GO:0019221">
    <property type="term" value="P:cytokine-mediated signaling pathway"/>
    <property type="evidence" value="ECO:0000304"/>
    <property type="project" value="Reactome"/>
</dbReference>
<dbReference type="GO" id="GO:0050832">
    <property type="term" value="P:defense response to fungus"/>
    <property type="evidence" value="ECO:0007669"/>
    <property type="project" value="Ensembl"/>
</dbReference>
<dbReference type="GO" id="GO:0050829">
    <property type="term" value="P:defense response to Gram-negative bacterium"/>
    <property type="evidence" value="ECO:0000314"/>
    <property type="project" value="UniProtKB"/>
</dbReference>
<dbReference type="GO" id="GO:0050830">
    <property type="term" value="P:defense response to Gram-positive bacterium"/>
    <property type="evidence" value="ECO:0000314"/>
    <property type="project" value="UniProtKB"/>
</dbReference>
<dbReference type="GO" id="GO:0022617">
    <property type="term" value="P:extracellular matrix disassembly"/>
    <property type="evidence" value="ECO:0000304"/>
    <property type="project" value="Reactome"/>
</dbReference>
<dbReference type="GO" id="GO:0006955">
    <property type="term" value="P:immune response"/>
    <property type="evidence" value="ECO:0000304"/>
    <property type="project" value="ProtInc"/>
</dbReference>
<dbReference type="GO" id="GO:0002548">
    <property type="term" value="P:monocyte chemotaxis"/>
    <property type="evidence" value="ECO:0000314"/>
    <property type="project" value="UniProtKB"/>
</dbReference>
<dbReference type="GO" id="GO:0050868">
    <property type="term" value="P:negative regulation of T cell activation"/>
    <property type="evidence" value="ECO:0000314"/>
    <property type="project" value="UniProtKB"/>
</dbReference>
<dbReference type="GO" id="GO:0042119">
    <property type="term" value="P:neutrophil activation"/>
    <property type="evidence" value="ECO:0000314"/>
    <property type="project" value="UniProtKB"/>
</dbReference>
<dbReference type="GO" id="GO:0070946">
    <property type="term" value="P:neutrophil-mediated killing of gram-positive bacterium"/>
    <property type="evidence" value="ECO:0007669"/>
    <property type="project" value="Ensembl"/>
</dbReference>
<dbReference type="GO" id="GO:0030168">
    <property type="term" value="P:platelet activation"/>
    <property type="evidence" value="ECO:0000314"/>
    <property type="project" value="UniProtKB"/>
</dbReference>
<dbReference type="GO" id="GO:0050778">
    <property type="term" value="P:positive regulation of immune response"/>
    <property type="evidence" value="ECO:0007669"/>
    <property type="project" value="Ensembl"/>
</dbReference>
<dbReference type="GO" id="GO:1901731">
    <property type="term" value="P:positive regulation of platelet aggregation"/>
    <property type="evidence" value="ECO:0000314"/>
    <property type="project" value="UniProtKB"/>
</dbReference>
<dbReference type="GO" id="GO:0051604">
    <property type="term" value="P:protein maturation"/>
    <property type="evidence" value="ECO:0000318"/>
    <property type="project" value="GO_Central"/>
</dbReference>
<dbReference type="GO" id="GO:0006468">
    <property type="term" value="P:protein phosphorylation"/>
    <property type="evidence" value="ECO:0000314"/>
    <property type="project" value="CACAO"/>
</dbReference>
<dbReference type="GO" id="GO:0016485">
    <property type="term" value="P:protein processing"/>
    <property type="evidence" value="ECO:0000314"/>
    <property type="project" value="UniProtKB"/>
</dbReference>
<dbReference type="GO" id="GO:0006508">
    <property type="term" value="P:proteolysis"/>
    <property type="evidence" value="ECO:0000314"/>
    <property type="project" value="UniProtKB"/>
</dbReference>
<dbReference type="GO" id="GO:0035590">
    <property type="term" value="P:purinergic nucleotide receptor signaling pathway"/>
    <property type="evidence" value="ECO:0000304"/>
    <property type="project" value="Reactome"/>
</dbReference>
<dbReference type="CDD" id="cd00190">
    <property type="entry name" value="Tryp_SPc"/>
    <property type="match status" value="1"/>
</dbReference>
<dbReference type="FunFam" id="2.40.10.10:FF:000014">
    <property type="entry name" value="Complement factor D"/>
    <property type="match status" value="1"/>
</dbReference>
<dbReference type="FunFam" id="2.40.10.10:FF:000028">
    <property type="entry name" value="Serine protease easter"/>
    <property type="match status" value="1"/>
</dbReference>
<dbReference type="Gene3D" id="2.40.10.10">
    <property type="entry name" value="Trypsin-like serine proteases"/>
    <property type="match status" value="2"/>
</dbReference>
<dbReference type="InterPro" id="IPR009003">
    <property type="entry name" value="Peptidase_S1_PA"/>
</dbReference>
<dbReference type="InterPro" id="IPR043504">
    <property type="entry name" value="Peptidase_S1_PA_chymotrypsin"/>
</dbReference>
<dbReference type="InterPro" id="IPR001314">
    <property type="entry name" value="Peptidase_S1A"/>
</dbReference>
<dbReference type="InterPro" id="IPR001254">
    <property type="entry name" value="Trypsin_dom"/>
</dbReference>
<dbReference type="InterPro" id="IPR018114">
    <property type="entry name" value="TRYPSIN_HIS"/>
</dbReference>
<dbReference type="InterPro" id="IPR033116">
    <property type="entry name" value="TRYPSIN_SER"/>
</dbReference>
<dbReference type="PANTHER" id="PTHR24271:SF13">
    <property type="entry name" value="CATHEPSIN G"/>
    <property type="match status" value="1"/>
</dbReference>
<dbReference type="PANTHER" id="PTHR24271">
    <property type="entry name" value="KALLIKREIN-RELATED"/>
    <property type="match status" value="1"/>
</dbReference>
<dbReference type="Pfam" id="PF00089">
    <property type="entry name" value="Trypsin"/>
    <property type="match status" value="1"/>
</dbReference>
<dbReference type="PRINTS" id="PR00722">
    <property type="entry name" value="CHYMOTRYPSIN"/>
</dbReference>
<dbReference type="SMART" id="SM00020">
    <property type="entry name" value="Tryp_SPc"/>
    <property type="match status" value="1"/>
</dbReference>
<dbReference type="SUPFAM" id="SSF50494">
    <property type="entry name" value="Trypsin-like serine proteases"/>
    <property type="match status" value="1"/>
</dbReference>
<dbReference type="PROSITE" id="PS50240">
    <property type="entry name" value="TRYPSIN_DOM"/>
    <property type="match status" value="1"/>
</dbReference>
<dbReference type="PROSITE" id="PS00134">
    <property type="entry name" value="TRYPSIN_HIS"/>
    <property type="match status" value="1"/>
</dbReference>
<dbReference type="PROSITE" id="PS00135">
    <property type="entry name" value="TRYPSIN_SER"/>
    <property type="match status" value="1"/>
</dbReference>
<comment type="function">
    <text evidence="1 4 5 7 8 9 11 12 13 14 15 16 17 18 20 21 24 26 27 28 29 31 32 35 36 38 41 42 43 44">Serine protease with trypsin- and chymotrypsin-like specificity (PubMed:29652924, PubMed:8194606). Also displays antibacterial activity against Gram-negative and Gram-positive bacteria independent of its protease activity (PubMed:2116408, PubMed:2117044). Prefers Phe and Tyr residues in the P1 position of substrates but also cleaves efficiently after Trp and Leu (PubMed:29652924). Shows a preference for negatively charged amino acids in the P2' position and for aliphatic amino acids both upstream and downstream of the cleavage site (PubMed:29652924). Required for recruitment and activation of platelets which is mediated by the F2RL3/PAR4 platelet receptor (PubMed:10702240, PubMed:3390156). Binds reversibly to and stimulates B cells and CD4(+) and CD8(+) T cells (PubMed:7842483, PubMed:9000539). Also binds reversibly to natural killer (NK) cells and enhances NK cell cytotoxicity through its protease activity (PubMed:9000539, PubMed:9536127). Cleaves complement C3 (PubMed:1861080). Cleaves vimentin (By similarity). Cleaves thrombin receptor F2R/PAR1 and acts as either an agonist or an inhibitor, depending on the F2R cleavage site (PubMed:10702240, PubMed:7744748). Cleavage of F2R at '41-Arg-|-Ser-42' results in receptor activation while cleavage at '55-Phe-|-Trp-56' results in inhibition of receptor activation (PubMed:7744748). Cleaves the synovial mucin-type protein PRG4/lubricin (PubMed:32144329). Cleaves and activates IL36G which promotes expression of chemokines CXCL1 and CXLC8 in keratinocytes (PubMed:30804664). Cleaves IL33 into mature forms which have greater activity than the unprocessed form (PubMed:22307629). Cleaves coagulation factor F8 to produce a partially activated form (PubMed:18217133). Also cleaves and activates coagulation factor F10 (PubMed:8920993). Cleaves leukocyte cell surface protein SPN/CD43 to release its extracellular domain and trigger its intramembrane proteolysis by gamma-secretase, releasing the CD43 cytoplasmic tail chain (CD43-ct) which translocates to the nucleus (PubMed:18586676). Cleaves CCL5/RANTES to produce RANTES(4-68) lacking the N-terminal three amino acids which exhibits reduced chemotactic and antiviral activities (PubMed:16963625). During apoptosis, cleaves SMARCA2/BRM to produce a 160 kDa cleavage product which localizes to the cytosol (PubMed:11259672). Cleaves myelin basic protein MBP in B cell lysosomes at '224-Phe-|-Lys-225' and '248-Phe-|-Ser-249', degrading the major immunogenic MBP epitope and preventing the activation of MBP-specific autoreactive T cells (PubMed:15100291). Cleaves annexin ANXA1 and antimicrobial peptide CAMP to produce peptides which act on neutrophil N-formyl peptide receptors to enhance the release of CXCL2 (PubMed:22879591). Acts as a ligand for the N-formyl peptide receptor FPR1, enhancing phagocyte chemotaxis (PubMed:15210802). Has antibacterial activity against the Gram-negative bacteria N.gonorrhoeae and P.aeruginosa (PubMed:1937776, PubMed:2116408). Likely to act against N.gonorrhoeae by interacting with N.gonorrhoeae penA/PBP2 (PubMed:2126324). Exhibits potent antimicrobial activity against the Gram-positive bacterium L.monocytogenes (PubMed:2117044). Has antibacterial activity against the Gram-positive bacterium S.aureus and degrades S.aureus biofilms, allowing polymorphonuclear leukocytes to penetrate the biofilm and phagocytose bacteria (PubMed:2117044, PubMed:32995850). Has antibacterial activity against M.tuberculosis (PubMed:15385470). Mediates CASP4 activation induced by the Td92 surface protein of the periodontal pathogen T.denticola, causing production and secretion of IL1A and leading to pyroptosis of gingival fibroblasts (PubMed:29077095). Induces platelet aggregation which is strongly potentiated in the presence of ELANE (PubMed:25211214, PubMed:9111081).</text>
</comment>
<comment type="catalytic activity">
    <reaction evidence="7 26 27 35 36 38">
        <text>Specificity similar to chymotrypsin C.</text>
        <dbReference type="EC" id="3.4.21.20"/>
    </reaction>
</comment>
<comment type="activity regulation">
    <text evidence="14 15 32 38">Inhibited by soybean trypsin inhibitor, benzamidine, the synthetic peptide R13K, Z-Gly-Leu-Phe-CH2Cl, phenylmethylsulfonyl fluoride, 3,4-dichloroisocoumarin, DFP, SBTI and alpha-1-antitrypsin. Inhibited by LPS from P.aeruginosa but not by LPS from S.minnesota. Not inhibited by elastinal, CMK, TLCK, ETDA or leupeptin.</text>
</comment>
<comment type="activity regulation">
    <text evidence="30">(Microbial infection) Inhibited reversibly by S.aureus EapH1.</text>
</comment>
<comment type="activity regulation">
    <text evidence="26">(Microbial infection) Activity is induced by the Td92 surface protein of the periodontal pathogen T.denticola.</text>
</comment>
<comment type="biophysicochemical properties">
    <kinetics>
        <KM evidence="38">1.15 mM for Z-Lys-SBzl</KM>
        <KM evidence="38">0.26 mM for Suc-Ala-Ala-Pro-Phe-SBzl</KM>
    </kinetics>
</comment>
<comment type="subunit">
    <text evidence="26">(Microbial infection) Interacts with CASP4; the interaction is promoted by the Td92 surface protein of the periodontal pathogen T.denticola and leads to CASP4 activation.</text>
</comment>
<comment type="subunit">
    <text evidence="19">(Microbial infection) Interacts with M.tuberculosis protein Rv3364c.</text>
</comment>
<comment type="subunit">
    <text evidence="30">(Microbial infection) Interacts with S.aureus EapH1; EapH1 acts as a reversible inhibitor of CATG activity.</text>
</comment>
<comment type="interaction">
    <interactant intactId="EBI-5462635">
        <id>P08311</id>
    </interactant>
    <interactant intactId="EBI-3867333">
        <id>A8MQ03</id>
        <label>CYSRT1</label>
    </interactant>
    <organismsDiffer>false</organismsDiffer>
    <experiments>3</experiments>
</comment>
<comment type="interaction">
    <interactant intactId="EBI-5462635">
        <id>P08311</id>
    </interactant>
    <interactant intactId="EBI-948001">
        <id>Q15323</id>
        <label>KRT31</label>
    </interactant>
    <organismsDiffer>false</organismsDiffer>
    <experiments>3</experiments>
</comment>
<comment type="interaction">
    <interactant intactId="EBI-5462635">
        <id>P08311</id>
    </interactant>
    <interactant intactId="EBI-945833">
        <id>Q7Z3S9</id>
        <label>NOTCH2NLA</label>
    </interactant>
    <organismsDiffer>false</organismsDiffer>
    <experiments>3</experiments>
</comment>
<comment type="interaction">
    <interactant intactId="EBI-5462635">
        <id>P08311</id>
    </interactant>
    <interactant intactId="EBI-79165">
        <id>Q9NRD5</id>
        <label>PICK1</label>
    </interactant>
    <organismsDiffer>false</organismsDiffer>
    <experiments>3</experiments>
</comment>
<comment type="subcellular location">
    <subcellularLocation>
        <location evidence="7 26 38">Cell membrane</location>
        <topology evidence="46">Peripheral membrane protein</topology>
    </subcellularLocation>
    <subcellularLocation>
        <location evidence="34">Cytoplasmic granule</location>
    </subcellularLocation>
    <subcellularLocation>
        <location evidence="26 29 32">Secreted</location>
    </subcellularLocation>
    <subcellularLocation>
        <location evidence="26">Cytoplasm</location>
        <location evidence="26">Cytosol</location>
    </subcellularLocation>
    <subcellularLocation>
        <location evidence="7 26">Lysosome</location>
    </subcellularLocation>
    <subcellularLocation>
        <location evidence="5">Nucleus</location>
    </subcellularLocation>
    <text evidence="5 7 29 32">Secreted by activated neutrophils (PubMed:3390156). Detected in synovial fluid (PubMed:32144329). Localizes to lysosomes in B cells where it is not endogenously synthesized but is internalized from the cell membrane (PubMed:15100291). Localizes to the nucleus during apoptosis (PubMed:11259672).</text>
</comment>
<comment type="tissue specificity">
    <text evidence="7 33">Expressed in neutrophils (at protein level) (PubMed:3799965). Expressed in B cells (PubMed:15100291).</text>
</comment>
<comment type="induction">
    <text evidence="9 26">Induced by the Td92 surface protein of the periodontal pathogen T.denticola (PubMed:29077095). Down-regulated in monocytes following M.tuberculosis infection and exposure to bacterial lipopolysaccharide which coincides with increased M.tuberculosis replication and intracellular survival (PubMed:15385470).</text>
</comment>
<comment type="PTM">
    <text evidence="25">Two C-terminal truncation variants have been identified, one which ends at Arg-243 and one which ends at Ser-244.</text>
</comment>
<comment type="similarity">
    <text evidence="3">Belongs to the peptidase S1 family.</text>
</comment>
<proteinExistence type="evidence at protein level"/>
<gene>
    <name type="primary">CTSG</name>
</gene>
<accession>P08311</accession>
<accession>Q6IBJ6</accession>
<accession>Q9UCA5</accession>
<accession>Q9UCU6</accession>
<keyword id="KW-0002">3D-structure</keyword>
<keyword id="KW-0044">Antibiotic</keyword>
<keyword id="KW-0929">Antimicrobial</keyword>
<keyword id="KW-1003">Cell membrane</keyword>
<keyword id="KW-0145">Chemotaxis</keyword>
<keyword id="KW-0963">Cytoplasm</keyword>
<keyword id="KW-0903">Direct protein sequencing</keyword>
<keyword id="KW-1015">Disulfide bond</keyword>
<keyword id="KW-0325">Glycoprotein</keyword>
<keyword id="KW-0378">Hydrolase</keyword>
<keyword id="KW-0458">Lysosome</keyword>
<keyword id="KW-0472">Membrane</keyword>
<keyword id="KW-0539">Nucleus</keyword>
<keyword id="KW-0645">Protease</keyword>
<keyword id="KW-1267">Proteomics identification</keyword>
<keyword id="KW-1185">Reference proteome</keyword>
<keyword id="KW-0964">Secreted</keyword>
<keyword id="KW-0720">Serine protease</keyword>
<keyword id="KW-0732">Signal</keyword>
<keyword id="KW-0865">Zymogen</keyword>
<sequence length="255" mass="28837">MQPLLLLLAFLLPTGAEAGEIIGGRESRPHSRPYMAYLQIQSPAGQSRCGGFLVREDFVLTAAHCWGSNINVTLGAHNIQRRENTQQHITARRAIRHPQYNQRTIQNDIMLLQLSRRVRRNRNVNPVALPRAQEGLRPGTLCTVAGWGRVSMRRGTDTLREVQLRVQRDRQCLRIFGSYDPRRQICVGDRRERKAAFKGDSGGPLLCNNVAHGIVSYGKSSGVPPEVFTRVSSFLPWIRTTMRSFKLLDQMETPL</sequence>
<protein>
    <recommendedName>
        <fullName>Cathepsin G</fullName>
        <shortName>CG</shortName>
        <ecNumber evidence="7 26 27 35 36 38">3.4.21.20</ecNumber>
    </recommendedName>
    <component>
        <recommendedName>
            <fullName evidence="47">Cathepsin G, C-terminal truncated form</fullName>
        </recommendedName>
    </component>
</protein>
<feature type="signal peptide" evidence="2">
    <location>
        <begin position="1"/>
        <end position="18"/>
    </location>
</feature>
<feature type="propeptide" id="PRO_0000027512" description="Activation peptide" evidence="14 22 23 33 37 38">
    <location>
        <begin position="19"/>
        <end position="20"/>
    </location>
</feature>
<feature type="chain" id="PRO_0000027513" description="Cathepsin G">
    <location>
        <begin position="21"/>
        <end position="244"/>
    </location>
</feature>
<feature type="chain" id="PRO_0000454551" description="Cathepsin G, C-terminal truncated form" evidence="25">
    <location>
        <begin position="21"/>
        <end position="243"/>
    </location>
</feature>
<feature type="propeptide" id="PRO_0000454552" evidence="22">
    <location>
        <begin position="245"/>
        <end position="255"/>
    </location>
</feature>
<feature type="domain" description="Peptidase S1" evidence="3">
    <location>
        <begin position="21"/>
        <end position="243"/>
    </location>
</feature>
<feature type="region of interest" description="Important for antimicrobial activity" evidence="16">
    <location>
        <begin position="21"/>
        <end position="25"/>
    </location>
</feature>
<feature type="region of interest" description="Important for antimicrobial activity" evidence="16">
    <location>
        <begin position="97"/>
        <end position="111"/>
    </location>
</feature>
<feature type="active site" description="Charge relay system" evidence="3">
    <location>
        <position position="64"/>
    </location>
</feature>
<feature type="active site" description="Charge relay system" evidence="3">
    <location>
        <position position="108"/>
    </location>
</feature>
<feature type="active site" description="Charge relay system" evidence="3">
    <location>
        <position position="201"/>
    </location>
</feature>
<feature type="glycosylation site" description="N-linked (GlcNAc...) (complex) asparagine; alternate" evidence="25">
    <location>
        <position position="71"/>
    </location>
</feature>
<feature type="glycosylation site" description="N-linked (GlcNAc...) (paucimannose) asparagine; alternate" evidence="25">
    <location>
        <position position="71"/>
    </location>
</feature>
<feature type="disulfide bond" evidence="6 10 30 40 45 48 49 50 51 52">
    <location>
        <begin position="49"/>
        <end position="65"/>
    </location>
</feature>
<feature type="disulfide bond" evidence="6 10 30 40 45 48 49 50 51 52">
    <location>
        <begin position="142"/>
        <end position="207"/>
    </location>
</feature>
<feature type="disulfide bond" evidence="6 10 30 40 45 48 49 50 51 52">
    <location>
        <begin position="172"/>
        <end position="186"/>
    </location>
</feature>
<feature type="sequence variant" id="VAR_006491" description="In dbSNP:rs45567233." evidence="39">
    <original>N</original>
    <variation>S</variation>
    <location>
        <position position="125"/>
    </location>
</feature>
<feature type="mutagenesis site" description="No effect on proteolytic processing, enzyme activation or sorting to cytoplasmic granules." evidence="34">
    <original>N</original>
    <variation>A</variation>
    <location>
        <position position="71"/>
    </location>
</feature>
<feature type="strand" evidence="53">
    <location>
        <begin position="35"/>
        <end position="42"/>
    </location>
</feature>
<feature type="strand" evidence="53">
    <location>
        <begin position="45"/>
        <end position="55"/>
    </location>
</feature>
<feature type="strand" evidence="53">
    <location>
        <begin position="58"/>
        <end position="61"/>
    </location>
</feature>
<feature type="helix" evidence="53">
    <location>
        <begin position="63"/>
        <end position="65"/>
    </location>
</feature>
<feature type="strand" evidence="53">
    <location>
        <begin position="68"/>
        <end position="75"/>
    </location>
</feature>
<feature type="strand" evidence="53">
    <location>
        <begin position="87"/>
        <end position="96"/>
    </location>
</feature>
<feature type="turn" evidence="53">
    <location>
        <begin position="102"/>
        <end position="105"/>
    </location>
</feature>
<feature type="strand" evidence="53">
    <location>
        <begin position="110"/>
        <end position="116"/>
    </location>
</feature>
<feature type="strand" evidence="55">
    <location>
        <begin position="121"/>
        <end position="124"/>
    </location>
</feature>
<feature type="strand" evidence="53">
    <location>
        <begin position="141"/>
        <end position="147"/>
    </location>
</feature>
<feature type="strand" evidence="53">
    <location>
        <begin position="150"/>
        <end position="153"/>
    </location>
</feature>
<feature type="strand" evidence="53">
    <location>
        <begin position="160"/>
        <end position="166"/>
    </location>
</feature>
<feature type="helix" evidence="53">
    <location>
        <begin position="169"/>
        <end position="175"/>
    </location>
</feature>
<feature type="turn" evidence="53">
    <location>
        <begin position="181"/>
        <end position="183"/>
    </location>
</feature>
<feature type="strand" evidence="53">
    <location>
        <begin position="184"/>
        <end position="187"/>
    </location>
</feature>
<feature type="strand" evidence="54">
    <location>
        <begin position="190"/>
        <end position="192"/>
    </location>
</feature>
<feature type="strand" evidence="53">
    <location>
        <begin position="204"/>
        <end position="207"/>
    </location>
</feature>
<feature type="strand" evidence="53">
    <location>
        <begin position="210"/>
        <end position="218"/>
    </location>
</feature>
<feature type="strand" evidence="53">
    <location>
        <begin position="226"/>
        <end position="230"/>
    </location>
</feature>
<feature type="helix" evidence="53">
    <location>
        <begin position="231"/>
        <end position="234"/>
    </location>
</feature>
<feature type="helix" evidence="53">
    <location>
        <begin position="235"/>
        <end position="242"/>
    </location>
</feature>
<evidence type="ECO:0000250" key="1">
    <source>
        <dbReference type="UniProtKB" id="P28293"/>
    </source>
</evidence>
<evidence type="ECO:0000255" key="2"/>
<evidence type="ECO:0000255" key="3">
    <source>
        <dbReference type="PROSITE-ProRule" id="PRU00274"/>
    </source>
</evidence>
<evidence type="ECO:0000269" key="4">
    <source>
    </source>
</evidence>
<evidence type="ECO:0000269" key="5">
    <source>
    </source>
</evidence>
<evidence type="ECO:0000269" key="6">
    <source>
    </source>
</evidence>
<evidence type="ECO:0000269" key="7">
    <source>
    </source>
</evidence>
<evidence type="ECO:0000269" key="8">
    <source>
    </source>
</evidence>
<evidence type="ECO:0000269" key="9">
    <source>
    </source>
</evidence>
<evidence type="ECO:0000269" key="10">
    <source>
    </source>
</evidence>
<evidence type="ECO:0000269" key="11">
    <source>
    </source>
</evidence>
<evidence type="ECO:0000269" key="12">
    <source>
    </source>
</evidence>
<evidence type="ECO:0000269" key="13">
    <source>
    </source>
</evidence>
<evidence type="ECO:0000269" key="14">
    <source>
    </source>
</evidence>
<evidence type="ECO:0000269" key="15">
    <source>
    </source>
</evidence>
<evidence type="ECO:0000269" key="16">
    <source>
    </source>
</evidence>
<evidence type="ECO:0000269" key="17">
    <source>
    </source>
</evidence>
<evidence type="ECO:0000269" key="18">
    <source>
    </source>
</evidence>
<evidence type="ECO:0000269" key="19">
    <source>
    </source>
</evidence>
<evidence type="ECO:0000269" key="20">
    <source>
    </source>
</evidence>
<evidence type="ECO:0000269" key="21">
    <source>
    </source>
</evidence>
<evidence type="ECO:0000269" key="22">
    <source>
    </source>
</evidence>
<evidence type="ECO:0000269" key="23">
    <source>
    </source>
</evidence>
<evidence type="ECO:0000269" key="24">
    <source>
    </source>
</evidence>
<evidence type="ECO:0000269" key="25">
    <source>
    </source>
</evidence>
<evidence type="ECO:0000269" key="26">
    <source>
    </source>
</evidence>
<evidence type="ECO:0000269" key="27">
    <source>
    </source>
</evidence>
<evidence type="ECO:0000269" key="28">
    <source>
    </source>
</evidence>
<evidence type="ECO:0000269" key="29">
    <source>
    </source>
</evidence>
<evidence type="ECO:0000269" key="30">
    <source>
    </source>
</evidence>
<evidence type="ECO:0000269" key="31">
    <source>
    </source>
</evidence>
<evidence type="ECO:0000269" key="32">
    <source>
    </source>
</evidence>
<evidence type="ECO:0000269" key="33">
    <source>
    </source>
</evidence>
<evidence type="ECO:0000269" key="34">
    <source>
    </source>
</evidence>
<evidence type="ECO:0000269" key="35">
    <source>
    </source>
</evidence>
<evidence type="ECO:0000269" key="36">
    <source>
    </source>
</evidence>
<evidence type="ECO:0000269" key="37">
    <source>
    </source>
</evidence>
<evidence type="ECO:0000269" key="38">
    <source>
    </source>
</evidence>
<evidence type="ECO:0000269" key="39">
    <source>
    </source>
</evidence>
<evidence type="ECO:0000269" key="40">
    <source>
    </source>
</evidence>
<evidence type="ECO:0000269" key="41">
    <source>
    </source>
</evidence>
<evidence type="ECO:0000269" key="42">
    <source>
    </source>
</evidence>
<evidence type="ECO:0000269" key="43">
    <source>
    </source>
</evidence>
<evidence type="ECO:0000269" key="44">
    <source>
    </source>
</evidence>
<evidence type="ECO:0000269" key="45">
    <source ref="46"/>
</evidence>
<evidence type="ECO:0000305" key="46"/>
<evidence type="ECO:0000305" key="47">
    <source>
    </source>
</evidence>
<evidence type="ECO:0007744" key="48">
    <source>
        <dbReference type="PDB" id="1AU8"/>
    </source>
</evidence>
<evidence type="ECO:0007744" key="49">
    <source>
        <dbReference type="PDB" id="1CGH"/>
    </source>
</evidence>
<evidence type="ECO:0007744" key="50">
    <source>
        <dbReference type="PDB" id="1KYN"/>
    </source>
</evidence>
<evidence type="ECO:0007744" key="51">
    <source>
        <dbReference type="PDB" id="1T32"/>
    </source>
</evidence>
<evidence type="ECO:0007744" key="52">
    <source>
        <dbReference type="PDB" id="6VTM"/>
    </source>
</evidence>
<evidence type="ECO:0007829" key="53">
    <source>
        <dbReference type="PDB" id="6VTM"/>
    </source>
</evidence>
<evidence type="ECO:0007829" key="54">
    <source>
        <dbReference type="PDB" id="8D4V"/>
    </source>
</evidence>
<evidence type="ECO:0007829" key="55">
    <source>
        <dbReference type="PDB" id="8G26"/>
    </source>
</evidence>
<reference key="1">
    <citation type="journal article" date="1987" name="Biochemistry">
        <title>Molecular cloning of human cathepsin G: structural similarity to mast cell and cytotoxic T lymphocyte proteinases.</title>
        <authorList>
            <person name="Salvesen G."/>
            <person name="Farley D."/>
            <person name="Shuman J."/>
            <person name="Przybyla A."/>
            <person name="Reilly C."/>
            <person name="Travis J."/>
        </authorList>
    </citation>
    <scope>NUCLEOTIDE SEQUENCE [MRNA]</scope>
</reference>
<reference key="2">
    <citation type="journal article" date="1989" name="J. Biol. Chem.">
        <title>Genomic organization and chromosomal localization of the human cathepsin G gene.</title>
        <authorList>
            <person name="Hohn P.A."/>
            <person name="Popescu N.C."/>
            <person name="Hanson R.D."/>
            <person name="Salvesen G."/>
            <person name="Ley T.J."/>
        </authorList>
    </citation>
    <scope>NUCLEOTIDE SEQUENCE [GENOMIC DNA]</scope>
</reference>
<reference key="3">
    <citation type="submission" date="2004-06" db="EMBL/GenBank/DDBJ databases">
        <title>Cloning of human full open reading frames in Gateway(TM) system entry vector (pDONR201).</title>
        <authorList>
            <person name="Halleck A."/>
            <person name="Ebert L."/>
            <person name="Mkoundinya M."/>
            <person name="Schick M."/>
            <person name="Eisenstein S."/>
            <person name="Neubert P."/>
            <person name="Kstrang K."/>
            <person name="Schatten R."/>
            <person name="Shen B."/>
            <person name="Henze S."/>
            <person name="Mar W."/>
            <person name="Korn B."/>
            <person name="Zuo D."/>
            <person name="Hu Y."/>
            <person name="LaBaer J."/>
        </authorList>
    </citation>
    <scope>NUCLEOTIDE SEQUENCE [LARGE SCALE MRNA]</scope>
</reference>
<reference key="4">
    <citation type="submission" date="2005-09" db="EMBL/GenBank/DDBJ databases">
        <authorList>
            <person name="Mural R.J."/>
            <person name="Istrail S."/>
            <person name="Sutton G.G."/>
            <person name="Florea L."/>
            <person name="Halpern A.L."/>
            <person name="Mobarry C.M."/>
            <person name="Lippert R."/>
            <person name="Walenz B."/>
            <person name="Shatkay H."/>
            <person name="Dew I."/>
            <person name="Miller J.R."/>
            <person name="Flanigan M.J."/>
            <person name="Edwards N.J."/>
            <person name="Bolanos R."/>
            <person name="Fasulo D."/>
            <person name="Halldorsson B.V."/>
            <person name="Hannenhalli S."/>
            <person name="Turner R."/>
            <person name="Yooseph S."/>
            <person name="Lu F."/>
            <person name="Nusskern D.R."/>
            <person name="Shue B.C."/>
            <person name="Zheng X.H."/>
            <person name="Zhong F."/>
            <person name="Delcher A.L."/>
            <person name="Huson D.H."/>
            <person name="Kravitz S.A."/>
            <person name="Mouchard L."/>
            <person name="Reinert K."/>
            <person name="Remington K.A."/>
            <person name="Clark A.G."/>
            <person name="Waterman M.S."/>
            <person name="Eichler E.E."/>
            <person name="Adams M.D."/>
            <person name="Hunkapiller M.W."/>
            <person name="Myers E.W."/>
            <person name="Venter J.C."/>
        </authorList>
    </citation>
    <scope>NUCLEOTIDE SEQUENCE [LARGE SCALE GENOMIC DNA]</scope>
</reference>
<reference key="5">
    <citation type="journal article" date="2004" name="Genome Res.">
        <title>The status, quality, and expansion of the NIH full-length cDNA project: the Mammalian Gene Collection (MGC).</title>
        <authorList>
            <consortium name="The MGC Project Team"/>
        </authorList>
    </citation>
    <scope>NUCLEOTIDE SEQUENCE [LARGE SCALE MRNA]</scope>
    <source>
        <tissue>Skin</tissue>
    </source>
</reference>
<reference key="6">
    <citation type="journal article" date="1994" name="FEBS Lett.">
        <title>Identification of the U-937 membrane-associated proteinase interacting with the V3 loop of HIV-1 gp120 as cathepsin G.</title>
        <authorList>
            <person name="Avril L.E."/>
            <person name="Di Martino-Ferrer M."/>
            <person name="Pignede G."/>
            <person name="Seman M."/>
            <person name="Gauthier F."/>
        </authorList>
    </citation>
    <scope>PROTEIN SEQUENCE OF 21-52</scope>
    <scope>FUNCTION</scope>
    <scope>CATALYTIC ACTIVITY</scope>
    <scope>ACTIVITY REGULATION</scope>
    <scope>BIOPHYSICOCHEMICAL PROPERTIES</scope>
    <scope>SUBCELLULAR LOCATION</scope>
    <source>
        <tissue>Monocyte</tissue>
    </source>
</reference>
<reference key="7">
    <citation type="journal article" date="1986" name="Anal. Biochem.">
        <title>Isolation, characterization, and amino-terminal amino acid sequence analysis of human neutrophil cathepsin G from normal donors.</title>
        <authorList>
            <person name="Heck L.W."/>
            <person name="Rostand K.S."/>
            <person name="Hunter F.A."/>
            <person name="Bhown A."/>
        </authorList>
    </citation>
    <scope>PROTEIN SEQUENCE OF 21-45</scope>
    <scope>TISSUE SPECIFICITY</scope>
</reference>
<reference key="8">
    <citation type="journal article" date="1989" name="Proc. Natl. Acad. Sci. U.S.A.">
        <title>Antibiotic proteins of human polymorphonuclear leukocytes.</title>
        <authorList>
            <person name="Gabay J.E."/>
            <person name="Scott R.W."/>
            <person name="Campanelli D."/>
            <person name="Griffith J."/>
            <person name="Wilde C."/>
            <person name="Marra M.N."/>
            <person name="Seeger M."/>
            <person name="Nathan C.F."/>
        </authorList>
    </citation>
    <scope>PROTEIN SEQUENCE OF 21-36</scope>
</reference>
<reference key="9">
    <citation type="journal article" date="1991" name="J. Immunol.">
        <title>Proteolysis of C3 on U937 cell plasma membranes. Purification of cathepsin G.</title>
        <authorList>
            <person name="Maison C.M."/>
            <person name="Villiers C.L."/>
            <person name="Colomb M.G."/>
        </authorList>
    </citation>
    <scope>PROTEIN SEQUENCE OF 21-30</scope>
    <scope>FUNCTION</scope>
    <scope>ACTIVITY REGULATION</scope>
    <source>
        <tissue>Monocyte</tissue>
    </source>
</reference>
<reference key="10">
    <citation type="journal article" date="1995" name="J. Immunol. Methods">
        <title>Use of proteinase 3 purified by reverse phase HPLC to detect autoantibodies in systemic vasculitis.</title>
        <authorList>
            <person name="Gaskin G."/>
            <person name="Kendal H."/>
            <person name="Coulthart A."/>
            <person name="Turner N."/>
            <person name="Pusey C.D."/>
        </authorList>
    </citation>
    <scope>PROTEIN SEQUENCE OF 21-30</scope>
    <source>
        <tissue>Neutrophil</tissue>
    </source>
</reference>
<reference key="11">
    <citation type="journal article" date="2015" name="Biomolecules">
        <title>Complementary LC-MS/MS-Based N-Glycan, N-Glycopeptide, and Intact N-Glycoprotein Profiling Reveals Unconventional Asn71-Glycosylation of Human Neutrophil Cathepsin G.</title>
        <authorList>
            <person name="Loke I."/>
            <person name="Packer N.H."/>
            <person name="Thaysen-Andersen M."/>
        </authorList>
    </citation>
    <scope>PROTEIN SEQUENCE OF 67-74</scope>
    <scope>GLYCOSYLATION AT ASN-71</scope>
    <scope>ALTERNATIVE C-TERMINAL PROCESSING</scope>
</reference>
<reference key="12">
    <citation type="journal article" date="1988" name="Biochem. J.">
        <title>Cathepsin G is a strong platelet agonist released by neutrophils.</title>
        <authorList>
            <person name="Selak M.A."/>
            <person name="Chignard M."/>
            <person name="Smith J.B."/>
        </authorList>
    </citation>
    <scope>FUNCTION</scope>
    <scope>ACTIVITY REGULATION</scope>
    <scope>SUBCELLULAR LOCATION</scope>
</reference>
<reference key="13">
    <citation type="journal article" date="1990" name="Biochemistry">
        <title>An unusual specificity in the activation of neutrophil serine proteinase zymogens.</title>
        <authorList>
            <person name="Salvesen G."/>
            <person name="Enghild J.J."/>
        </authorList>
    </citation>
    <scope>PROTEOLYTIC PROCESSING</scope>
</reference>
<reference key="14">
    <citation type="journal article" date="1990" name="J. Biol. Chem.">
        <title>Identification of the primary antimicrobial domains in human neutrophil cathepsin G.</title>
        <authorList>
            <person name="Bangalore N."/>
            <person name="Travis J."/>
            <person name="Onunka V.C."/>
            <person name="Pohl J."/>
            <person name="Shafer W.M."/>
        </authorList>
    </citation>
    <scope>FUNCTION</scope>
    <scope>REGIONS IMPORTANT FOR ANTIMICROBIAL ACTIVITY</scope>
</reference>
<reference key="15">
    <citation type="journal article" date="1990" name="J. Gen. Microbiol.">
        <title>Listericidal activity of human neutrophil cathepsin G.</title>
        <authorList>
            <person name="Alford C.E."/>
            <person name="Amaral E."/>
            <person name="Campbell P.A."/>
        </authorList>
    </citation>
    <scope>FUNCTION</scope>
</reference>
<reference key="16">
    <citation type="journal article" date="1990" name="Mol. Microbiol.">
        <title>Molecular mechanism for the antigonococcal action of lysosomal cathepsin G.</title>
        <authorList>
            <person name="Shafer W.M."/>
            <person name="Onunka V.C."/>
            <person name="Jannoun M."/>
            <person name="Huthwaite L.W."/>
        </authorList>
    </citation>
    <scope>FUNCTION</scope>
</reference>
<reference key="17">
    <citation type="journal article" date="1991" name="Infect. Immun.">
        <title>Comparison of granule proteins from human polymorphonuclear leukocytes which are bactericidal toward Pseudomonas aeruginosa.</title>
        <authorList>
            <person name="Wasiluk K.R."/>
            <person name="Skubitz K.M."/>
            <person name="Gray B.H."/>
        </authorList>
    </citation>
    <scope>FUNCTION AS A MICROBICIDE</scope>
    <scope>ACTIVITY REGULATION</scope>
</reference>
<reference key="18">
    <citation type="journal article" date="1995" name="Cell. Immunol.">
        <title>Stimulation of human lymphocytes by cathepsin G.</title>
        <authorList>
            <person name="Hase-Yamazaki T."/>
            <person name="Aoki Y."/>
        </authorList>
    </citation>
    <scope>FUNCTION</scope>
    <scope>CATALYTIC ACTIVITY</scope>
</reference>
<reference key="19">
    <citation type="journal article" date="1995" name="J. Biol. Chem.">
        <title>Proteolysis of the human platelet and endothelial cell thrombin receptor by neutrophil-derived cathepsin G.</title>
        <authorList>
            <person name="Molino M."/>
            <person name="Blanchard N."/>
            <person name="Belmonte E."/>
            <person name="Tarver A.P."/>
            <person name="Abrams C."/>
            <person name="Hoxie J.A."/>
            <person name="Cerletti C."/>
            <person name="Brass L.F."/>
        </authorList>
    </citation>
    <scope>FUNCTION</scope>
    <scope>CATALYTIC ACTIVITY</scope>
</reference>
<reference key="20">
    <citation type="journal article" date="1995" name="J. Biol. Chem.">
        <title>Human cathepsin G lacking functional glycosylation site is proteolytically processed and targeted for storage in granules after transfection to the rat basophilic/mast cell line RBL or the murine myeloid cell line 32D.</title>
        <authorList>
            <person name="Garwicz D."/>
            <person name="Lindmark A."/>
            <person name="Gullberg U."/>
        </authorList>
    </citation>
    <scope>SUBCELLULAR LOCATION</scope>
    <scope>MUTAGENESIS OF ASN-71</scope>
</reference>
<reference key="21">
    <citation type="journal article" date="1996" name="Biochem. J.">
        <title>Activation of Mac-1 (CD11b/CD18)-bound factor X by released cathepsin G defines an alternative pathway of leucocyte initiation of coagulation.</title>
        <authorList>
            <person name="Plescia J."/>
            <person name="Altieri D.C."/>
        </authorList>
    </citation>
    <scope>FUNCTION</scope>
</reference>
<reference key="22">
    <citation type="journal article" date="1997" name="J. Biol. Chem.">
        <title>Human neutrophil elastase proteolytically activates the platelet integrin alphaIIbbeta3 through cleavage of the carboxyl terminus of the alphaIIb subunit heavy chain. Involvement in the potentiation of platelet aggregation.</title>
        <authorList>
            <person name="Si-Tahar M."/>
            <person name="Pidard D."/>
            <person name="Balloy V."/>
            <person name="Moniatte M."/>
            <person name="Kieffer N."/>
            <person name="Van Dorsselaer A."/>
            <person name="Chignard M."/>
        </authorList>
    </citation>
    <scope>FUNCTION</scope>
</reference>
<reference key="23">
    <citation type="journal article" date="1997" name="J. Leukoc. Biol.">
        <title>Cathepsin G binds to human lymphocytes.</title>
        <authorList>
            <person name="Yamazaki T."/>
            <person name="Aoki Y."/>
        </authorList>
    </citation>
    <scope>FUNCTION</scope>
</reference>
<reference key="24">
    <citation type="journal article" date="1998" name="Immunology">
        <title>Cathepsin G enhances human natural killer cytotoxicity.</title>
        <authorList>
            <person name="Yamazaki T."/>
            <person name="Aoki Y."/>
        </authorList>
    </citation>
    <scope>FUNCTION</scope>
</reference>
<reference key="25">
    <citation type="journal article" date="2000" name="J. Biol. Chem.">
        <title>Cathepsin G activates protease-activated receptor-4 in human platelets.</title>
        <authorList>
            <person name="Sambrano G.R."/>
            <person name="Huang W."/>
            <person name="Faruqi T."/>
            <person name="Mahrus S."/>
            <person name="Craik C."/>
            <person name="Coughlin S.R."/>
        </authorList>
    </citation>
    <scope>FUNCTION</scope>
</reference>
<reference key="26">
    <citation type="journal article" date="2001" name="Proc. Natl. Acad. Sci. U.S.A.">
        <title>The human brm protein is cleaved during apoptosis: the role of cathepsin G.</title>
        <authorList>
            <person name="Biggs J.R."/>
            <person name="Yang J."/>
            <person name="Gullberg U."/>
            <person name="Muchardt C."/>
            <person name="Yaniv M."/>
            <person name="Kraft A.S."/>
        </authorList>
    </citation>
    <scope>FUNCTION</scope>
    <scope>SUBCELLULAR LOCATION</scope>
</reference>
<reference key="27">
    <citation type="journal article" date="2004" name="Infect. Immun.">
        <title>The down-regulation of cathepsin G in THP-1 monocytes after infection with Mycobacterium tuberculosis is associated with increased intracellular survival of bacilli.</title>
        <authorList>
            <person name="Rivera-Marrero C.A."/>
            <person name="Stewart J."/>
            <person name="Shafer W.M."/>
            <person name="Roman J."/>
        </authorList>
    </citation>
    <scope>FUNCTION</scope>
    <scope>INDUCTION</scope>
</reference>
<reference key="28">
    <citation type="journal article" date="2004" name="J. Immunol.">
        <title>Identification of neutrophil granule protein cathepsin G as a novel chemotactic agonist for the G protein-coupled formyl peptide receptor.</title>
        <authorList>
            <person name="Sun R."/>
            <person name="Iribarren P."/>
            <person name="Zhang N."/>
            <person name="Zhou Y."/>
            <person name="Gong W."/>
            <person name="Cho E.H."/>
            <person name="Lockett S."/>
            <person name="Chertov O."/>
            <person name="Bednar F."/>
            <person name="Rogers T.J."/>
            <person name="Oppenheim J.J."/>
            <person name="Wang J.M."/>
        </authorList>
    </citation>
    <scope>FUNCTION</scope>
</reference>
<reference key="29">
    <citation type="journal article" date="2004" name="J. Immunol.">
        <title>Cathepsin G, and not the asparagine-specific endoprotease, controls the processing of myelin basic protein in lysosomes from human B lymphocytes.</title>
        <authorList>
            <person name="Burster T."/>
            <person name="Beck A."/>
            <person name="Tolosa E."/>
            <person name="Marin-Esteban V."/>
            <person name="Roetzschke O."/>
            <person name="Falk K."/>
            <person name="Lautwein A."/>
            <person name="Reich M."/>
            <person name="Brandenburg J."/>
            <person name="Schwarz G."/>
            <person name="Wiendl H."/>
            <person name="Melms A."/>
            <person name="Lehmann R."/>
            <person name="Stevanovic S."/>
            <person name="Kalbacher H."/>
            <person name="Driessen C."/>
        </authorList>
    </citation>
    <scope>FUNCTION</scope>
    <scope>CATALYTIC ACTIVITY</scope>
    <scope>SUBCELLULAR LOCATION</scope>
    <scope>TISSUE SPECIFICITY</scope>
</reference>
<reference key="30">
    <citation type="journal article" date="2006" name="J. Leukoc. Biol.">
        <title>N-terminal proteolytic processing by cathepsin G converts RANTES/CCL5 and related analogs into a truncated 4-68 variant.</title>
        <authorList>
            <person name="Lim J.K."/>
            <person name="Lu W."/>
            <person name="Hartley O."/>
            <person name="DeVico A.L."/>
        </authorList>
    </citation>
    <scope>FUNCTION</scope>
</reference>
<reference key="31">
    <citation type="journal article" date="2008" name="J. Biol. Chem.">
        <title>The cleavage of neutrophil leukosialin (CD43) by cathepsin G releases its extracellular domain and triggers its intramembrane proteolysis by presenilin/gamma-secretase.</title>
        <authorList>
            <person name="Mambole A."/>
            <person name="Baruch D."/>
            <person name="Nusbaum P."/>
            <person name="Bigot S."/>
            <person name="Suzuki M."/>
            <person name="Lesavre P."/>
            <person name="Fukuda M."/>
            <person name="Halbwachs-Mecarelli L."/>
        </authorList>
    </citation>
    <scope>FUNCTION</scope>
</reference>
<reference key="32">
    <citation type="journal article" date="2008" name="Thromb. Haemost.">
        <title>Cathepsin G, a leukocyte protease, activates coagulation factor VIII.</title>
        <authorList>
            <person name="Gale A.J."/>
            <person name="Rozenshteyn D."/>
        </authorList>
    </citation>
    <scope>FUNCTION</scope>
</reference>
<reference key="33">
    <citation type="journal article" date="2011" name="BMC Syst. Biol.">
        <title>Initial characterization of the human central proteome.</title>
        <authorList>
            <person name="Burkard T.R."/>
            <person name="Planyavsky M."/>
            <person name="Kaupe I."/>
            <person name="Breitwieser F.P."/>
            <person name="Buerckstuemmer T."/>
            <person name="Bennett K.L."/>
            <person name="Superti-Furga G."/>
            <person name="Colinge J."/>
        </authorList>
    </citation>
    <scope>IDENTIFICATION BY MASS SPECTROMETRY [LARGE SCALE ANALYSIS]</scope>
</reference>
<reference key="34">
    <citation type="journal article" date="2011" name="Front. Microbiol.">
        <title>Inhibition of the plasma-membrane-associated serine protease cathepsin G by Mycobacterium tuberculosis Rv3364c suppresses caspase-1 and pyroptosis in macrophages.</title>
        <authorList>
            <person name="Danelishvili L."/>
            <person name="Everman J.L."/>
            <person name="McNamara M.J."/>
            <person name="Bermudez L.E."/>
        </authorList>
    </citation>
    <scope>ACTIVITY REGULATION (MICROBIAL INFECTION)</scope>
    <scope>INTERACTION WITH M.TUBERCULOSIS RV3364C (MICROBIAL INFECTION)</scope>
    <scope>IDENTIFICATION BY MASS SPECTROMETRY</scope>
</reference>
<reference key="35">
    <citation type="journal article" date="2012" name="J. Biol. Chem.">
        <title>Cathepsin G-regulated release of formyl peptide receptor agonists modulate neutrophil effector functions.</title>
        <authorList>
            <person name="Woloszynek J.C."/>
            <person name="Hu Y."/>
            <person name="Pham C.T."/>
        </authorList>
    </citation>
    <scope>FUNCTION</scope>
</reference>
<reference key="36">
    <citation type="journal article" date="2012" name="Proc. Natl. Acad. Sci. U.S.A.">
        <title>IL-33 is processed into mature bioactive forms by neutrophil elastase and cathepsin G.</title>
        <authorList>
            <person name="Lefrancais E."/>
            <person name="Roga S."/>
            <person name="Gautier V."/>
            <person name="Gonzalez-de-Peredo A."/>
            <person name="Monsarrat B."/>
            <person name="Girard J.P."/>
            <person name="Cayrol C."/>
        </authorList>
    </citation>
    <scope>FUNCTION</scope>
</reference>
<reference evidence="46" key="37">
    <citation type="journal article" date="2014" name="PLoS Pathog.">
        <title>Plasmodium falciparum infection induces expression of a mosquito salivary protein (Agaphelin) that targets neutrophil function and inhibits thrombosis without impairing hemostasis.</title>
        <authorList>
            <person name="Waisberg M."/>
            <person name="Molina-Cruz A."/>
            <person name="Mizurini D.M."/>
            <person name="Gera N."/>
            <person name="Sousa B.C."/>
            <person name="Ma D."/>
            <person name="Leal A.C."/>
            <person name="Gomes T."/>
            <person name="Kotsyfakis M."/>
            <person name="Ribeiro J.M."/>
            <person name="Lukszo J."/>
            <person name="Reiter K."/>
            <person name="Porcella S.F."/>
            <person name="Oliveira C.J."/>
            <person name="Monteiro R.Q."/>
            <person name="Barillas-Mury C."/>
            <person name="Pierce S.K."/>
            <person name="Francischetti I.M."/>
        </authorList>
    </citation>
    <scope>FUNCTION</scope>
</reference>
<reference key="38">
    <citation type="journal article" date="2015" name="Proteomics">
        <title>N-terminome analysis of the human mitochondrial proteome.</title>
        <authorList>
            <person name="Vaca Jacome A.S."/>
            <person name="Rabilloud T."/>
            <person name="Schaeffer-Reiss C."/>
            <person name="Rompais M."/>
            <person name="Ayoub D."/>
            <person name="Lane L."/>
            <person name="Bairoch A."/>
            <person name="Van Dorsselaer A."/>
            <person name="Carapito C."/>
        </authorList>
    </citation>
    <scope>IDENTIFICATION BY MASS SPECTROMETRY [LARGE SCALE ANALYSIS]</scope>
</reference>
<reference key="39">
    <citation type="journal article" date="2018" name="Cell Death Differ.">
        <title>Caspase-4 activation by a bacterial surface protein is mediated by cathepsin G in human gingival fibroblasts.</title>
        <authorList>
            <person name="Jun H.K."/>
            <person name="Jung Y.J."/>
            <person name="Ji S."/>
            <person name="An S.J."/>
            <person name="Choi B.K."/>
        </authorList>
    </citation>
    <scope>FUNCTION</scope>
    <scope>CATALYTIC ACTIVITY</scope>
    <scope>ACTIVITY REGULATION</scope>
    <scope>INTERACTION WITH CASP4</scope>
    <scope>SUBCELLULAR LOCATION</scope>
    <scope>INDUCTION</scope>
</reference>
<reference key="40">
    <citation type="journal article" date="2018" name="PLoS ONE">
        <title>Extended cleavage specificity of human neutrophil cathepsin G: A low activity protease with dual chymase and tryptase-type specificities.</title>
        <authorList>
            <person name="Thorpe M."/>
            <person name="Fu Z."/>
            <person name="Chahal G."/>
            <person name="Akula S."/>
            <person name="Kervinen J."/>
            <person name="de Garavilla L."/>
            <person name="Hellman L."/>
        </authorList>
    </citation>
    <scope>FUNCTION</scope>
    <scope>CATALYTIC ACTIVITY</scope>
</reference>
<reference key="41">
    <citation type="journal article" date="2019" name="Drug Des. Dev. Ther.">
        <title>Cathepsin G cleaves and activates IL-36gamma and promotes the inflammation of psoriasis.</title>
        <authorList>
            <person name="Guo J."/>
            <person name="Tu J."/>
            <person name="Hu Y."/>
            <person name="Song G."/>
            <person name="Yin Z."/>
        </authorList>
    </citation>
    <scope>FUNCTION</scope>
</reference>
<reference key="42">
    <citation type="journal article" date="2020" name="Sci. Rep.">
        <title>Cathepsin g Degrades Both Glycosylated and Unglycosylated Regions of Lubricin, a Synovial Mucin.</title>
        <authorList>
            <person name="Huang S."/>
            <person name="Thomsson K.A."/>
            <person name="Jin C."/>
            <person name="Alweddi S."/>
            <person name="Struglics A."/>
            <person name="Rolfson O."/>
            <person name="Bjoerkman L.I."/>
            <person name="Kalamajski S."/>
            <person name="Schmidt T.A."/>
            <person name="Jay G.D."/>
            <person name="Krawetz R."/>
            <person name="Karlsson N.G."/>
            <person name="Eisler T."/>
        </authorList>
    </citation>
    <scope>FUNCTION</scope>
    <scope>SUBCELLULAR LOCATION</scope>
</reference>
<reference key="43">
    <citation type="journal article" date="2021" name="Sci. Rep.">
        <authorList>
            <person name="Huang S."/>
            <person name="Thomsson K.A."/>
            <person name="Jin C."/>
            <person name="Alweddi S."/>
            <person name="Struglics A."/>
            <person name="Rolfson O."/>
            <person name="Bjoerkman L.I."/>
            <person name="Kalamajski S."/>
            <person name="Schmidt T.A."/>
            <person name="Jay G.D."/>
            <person name="Krawetz R."/>
            <person name="Karlsson N.G."/>
            <person name="Eisler T."/>
        </authorList>
    </citation>
    <scope>ERRATUM OF PUBMED:32144329</scope>
</reference>
<reference key="44">
    <citation type="journal article" date="2021" name="J. Infect. Dis.">
        <title>Cathepsin G Degrades Staphylococcus aureus Biofilms.</title>
        <authorList>
            <person name="Kavanaugh J.S."/>
            <person name="Leidal K.G."/>
            <person name="Nauseef W.M."/>
            <person name="Horswill A.R."/>
        </authorList>
    </citation>
    <scope>FUNCTION</scope>
</reference>
<reference evidence="49" key="45">
    <citation type="journal article" date="1996" name="EMBO J.">
        <title>The 1.8 A crystal structure of human cathepsin G in complex with Suc-Val-Pro-PheP-(OPh)2: a Janus-faced proteinase with two opposite specificities.</title>
        <authorList>
            <person name="Hof P."/>
            <person name="Mayr I."/>
            <person name="Huber R."/>
            <person name="Korzus E."/>
            <person name="Potempa J."/>
            <person name="Travis J."/>
            <person name="Powers J.C."/>
            <person name="Bode W."/>
        </authorList>
    </citation>
    <scope>X-RAY CRYSTALLOGRAPHY (1.8 ANGSTROMS)</scope>
    <scope>DISULFIDE BONDS</scope>
</reference>
<reference evidence="48" key="46">
    <citation type="submission" date="1997-09" db="PDB data bank">
        <authorList>
            <person name="Medrano F.J."/>
            <person name="Bode W."/>
            <person name="Banbula A."/>
            <person name="Potempa J."/>
        </authorList>
    </citation>
    <scope>X-RAY CRYSTALLOGRAPHY (1.9 ANGSTROMS)</scope>
    <scope>DISULFIDE BONDS</scope>
</reference>
<reference evidence="50" key="47">
    <citation type="journal article" date="2002" name="J. Am. Chem. Soc.">
        <title>Nonpeptide inhibitors of cathepsin G: optimization of a novel beta-ketophosphonic acid lead by structure-based drug design.</title>
        <authorList>
            <person name="Greco M.N."/>
            <person name="Hawkins M.J."/>
            <person name="Powell E.T."/>
            <person name="Almond H.R. Jr."/>
            <person name="Corcoran T.W."/>
            <person name="de Garavilla L."/>
            <person name="Kauffman J.A."/>
            <person name="Recacha R."/>
            <person name="Chattopadhyay D."/>
            <person name="Andrade-Gordon P."/>
            <person name="Maryanoff B.E."/>
        </authorList>
    </citation>
    <scope>X-RAY CRYSTALLOGRAPHY (3.50 ANGSTROMS) OF 21-255 IN COMPLEX WITH INHIBITOR</scope>
    <scope>DISULFIDE BONDS</scope>
</reference>
<reference evidence="51" key="48">
    <citation type="journal article" date="2005" name="J. Biol. Chem.">
        <title>A novel, potent dual inhibitor of the leukocyte proteases cathepsin G and chymase: molecular mechanisms and anti-inflammatory activity in vivo.</title>
        <authorList>
            <person name="de Garavilla L."/>
            <person name="Greco M.N."/>
            <person name="Sukumar N."/>
            <person name="Chen Z.W."/>
            <person name="Pineda A.O."/>
            <person name="Mathews F.S."/>
            <person name="Di Cera E."/>
            <person name="Giardino E.C."/>
            <person name="Wells G.I."/>
            <person name="Haertlein B.J."/>
            <person name="Kauffman J.A."/>
            <person name="Corcoran T.W."/>
            <person name="Derian C.K."/>
            <person name="Eckardt A.J."/>
            <person name="Damiano B.P."/>
            <person name="Andrade-Gordon P."/>
            <person name="Maryanoff B.E."/>
        </authorList>
    </citation>
    <scope>X-RAY CRYSTALLOGRAPHY (1.85 ANGSTROMS) OF 21-244 IN COMPLEX WITH INHIBITOR</scope>
    <scope>DISULFIDE BONDS</scope>
</reference>
<reference evidence="52" key="49">
    <citation type="journal article" date="2020" name="J. Biol. Chem.">
        <title>Local structural plasticity of the Staphylococcus aureus evasion protein EapH1 enables engagement with multiple neutrophil serine proteases.</title>
        <authorList>
            <person name="Herdendorf T.J."/>
            <person name="Stapels D.A.C."/>
            <person name="Rooijakkers S.H.M."/>
            <person name="Geisbrecht B.V."/>
        </authorList>
    </citation>
    <scope>X-RAY CRYSTALLOGRAPHY (1.60 ANGSTROMS) OF 21-244 IN COMPLEX WITH S.AUREUS EAPH1</scope>
    <scope>ACTIVITY REGULATION</scope>
    <scope>DISULFIDE BONDS</scope>
</reference>
<reference key="50">
    <citation type="journal article" date="1993" name="Hum. Genet.">
        <title>Sequence variant of the human cathepsin G gene.</title>
        <authorList>
            <person name="Luedecke B."/>
            <person name="Poller W."/>
            <person name="Olek K."/>
            <person name="Bartholome K."/>
        </authorList>
    </citation>
    <scope>VARIANT SER-125</scope>
</reference>
<name>CATG_HUMAN</name>
<organism>
    <name type="scientific">Homo sapiens</name>
    <name type="common">Human</name>
    <dbReference type="NCBI Taxonomy" id="9606"/>
    <lineage>
        <taxon>Eukaryota</taxon>
        <taxon>Metazoa</taxon>
        <taxon>Chordata</taxon>
        <taxon>Craniata</taxon>
        <taxon>Vertebrata</taxon>
        <taxon>Euteleostomi</taxon>
        <taxon>Mammalia</taxon>
        <taxon>Eutheria</taxon>
        <taxon>Euarchontoglires</taxon>
        <taxon>Primates</taxon>
        <taxon>Haplorrhini</taxon>
        <taxon>Catarrhini</taxon>
        <taxon>Hominidae</taxon>
        <taxon>Homo</taxon>
    </lineage>
</organism>